<name>GET1_SCLS1</name>
<feature type="chain" id="PRO_0000388618" description="Protein get1">
    <location>
        <begin position="1"/>
        <end position="217"/>
    </location>
</feature>
<feature type="topological domain" description="Lumenal" evidence="1">
    <location>
        <begin position="1"/>
        <end position="4"/>
    </location>
</feature>
<feature type="transmembrane region" description="Helical" evidence="1">
    <location>
        <begin position="5"/>
        <end position="24"/>
    </location>
</feature>
<feature type="topological domain" description="Cytoplasmic" evidence="1">
    <location>
        <begin position="25"/>
        <end position="110"/>
    </location>
</feature>
<feature type="transmembrane region" description="Helical" evidence="1">
    <location>
        <begin position="111"/>
        <end position="131"/>
    </location>
</feature>
<feature type="topological domain" description="Lumenal" evidence="1">
    <location>
        <begin position="132"/>
        <end position="155"/>
    </location>
</feature>
<feature type="transmembrane region" description="Helical" evidence="1">
    <location>
        <begin position="156"/>
        <end position="172"/>
    </location>
</feature>
<feature type="topological domain" description="Cytoplasmic" evidence="1">
    <location>
        <begin position="173"/>
        <end position="217"/>
    </location>
</feature>
<feature type="region of interest" description="Disordered" evidence="2">
    <location>
        <begin position="195"/>
        <end position="217"/>
    </location>
</feature>
<feature type="coiled-coil region" evidence="1">
    <location>
        <begin position="43"/>
        <end position="97"/>
    </location>
</feature>
<proteinExistence type="inferred from homology"/>
<organism>
    <name type="scientific">Sclerotinia sclerotiorum (strain ATCC 18683 / 1980 / Ss-1)</name>
    <name type="common">White mold</name>
    <name type="synonym">Whetzelinia sclerotiorum</name>
    <dbReference type="NCBI Taxonomy" id="665079"/>
    <lineage>
        <taxon>Eukaryota</taxon>
        <taxon>Fungi</taxon>
        <taxon>Dikarya</taxon>
        <taxon>Ascomycota</taxon>
        <taxon>Pezizomycotina</taxon>
        <taxon>Leotiomycetes</taxon>
        <taxon>Helotiales</taxon>
        <taxon>Sclerotiniaceae</taxon>
        <taxon>Sclerotinia</taxon>
    </lineage>
</organism>
<accession>A7EF54</accession>
<evidence type="ECO:0000255" key="1">
    <source>
        <dbReference type="HAMAP-Rule" id="MF_03113"/>
    </source>
</evidence>
<evidence type="ECO:0000256" key="2">
    <source>
        <dbReference type="SAM" id="MobiDB-lite"/>
    </source>
</evidence>
<evidence type="ECO:0000305" key="3"/>
<gene>
    <name type="primary">get1</name>
    <name type="ORF">SS1G_03945</name>
</gene>
<sequence length="217" mass="24457">MPSLLFTCFLVQLLIHLVNTFGAATINNLLWNLYNMLPTPTSQSAGEQKKLKREYMKVRQEMNATSSQDEFAKWAKLRRQHDKLYDQLEKSKSSLDSTKSTFDTSVSTLRWLGTNGLRMLLQFWFSKQAMFWLPKGWFPYYAEWLLSFPRAPLGSISIQAWTLACAAVILLVSDALVAVVALVLGARTGVQGQKAKKMEEPMKAGGQGTEKAGKKEL</sequence>
<comment type="function">
    <text evidence="1">Required for the post-translational delivery of tail-anchored (TA) proteins to the endoplasmic reticulum. Acts as a membrane receptor for soluble get3, which recognizes and selectively binds the transmembrane domain of TA proteins in the cytosol.</text>
</comment>
<comment type="subunit">
    <text evidence="1">Interacts with get3.</text>
</comment>
<comment type="subcellular location">
    <subcellularLocation>
        <location evidence="1">Endoplasmic reticulum membrane</location>
        <topology evidence="1">Multi-pass membrane protein</topology>
    </subcellularLocation>
</comment>
<comment type="similarity">
    <text evidence="1">Belongs to the WRB/GET1 family.</text>
</comment>
<comment type="sequence caution" evidence="3">
    <conflict type="erroneous gene model prediction">
        <sequence resource="EMBL-CDS" id="EDO01470"/>
    </conflict>
</comment>
<keyword id="KW-0175">Coiled coil</keyword>
<keyword id="KW-0256">Endoplasmic reticulum</keyword>
<keyword id="KW-0472">Membrane</keyword>
<keyword id="KW-1185">Reference proteome</keyword>
<keyword id="KW-0812">Transmembrane</keyword>
<keyword id="KW-1133">Transmembrane helix</keyword>
<keyword id="KW-0813">Transport</keyword>
<protein>
    <recommendedName>
        <fullName evidence="1">Protein get1</fullName>
    </recommendedName>
    <alternativeName>
        <fullName evidence="1">Guided entry of tail-anchored proteins 1</fullName>
    </alternativeName>
</protein>
<reference key="1">
    <citation type="journal article" date="2011" name="PLoS Genet.">
        <title>Genomic analysis of the necrotrophic fungal pathogens Sclerotinia sclerotiorum and Botrytis cinerea.</title>
        <authorList>
            <person name="Amselem J."/>
            <person name="Cuomo C.A."/>
            <person name="van Kan J.A.L."/>
            <person name="Viaud M."/>
            <person name="Benito E.P."/>
            <person name="Couloux A."/>
            <person name="Coutinho P.M."/>
            <person name="de Vries R.P."/>
            <person name="Dyer P.S."/>
            <person name="Fillinger S."/>
            <person name="Fournier E."/>
            <person name="Gout L."/>
            <person name="Hahn M."/>
            <person name="Kohn L."/>
            <person name="Lapalu N."/>
            <person name="Plummer K.M."/>
            <person name="Pradier J.-M."/>
            <person name="Quevillon E."/>
            <person name="Sharon A."/>
            <person name="Simon A."/>
            <person name="ten Have A."/>
            <person name="Tudzynski B."/>
            <person name="Tudzynski P."/>
            <person name="Wincker P."/>
            <person name="Andrew M."/>
            <person name="Anthouard V."/>
            <person name="Beever R.E."/>
            <person name="Beffa R."/>
            <person name="Benoit I."/>
            <person name="Bouzid O."/>
            <person name="Brault B."/>
            <person name="Chen Z."/>
            <person name="Choquer M."/>
            <person name="Collemare J."/>
            <person name="Cotton P."/>
            <person name="Danchin E.G."/>
            <person name="Da Silva C."/>
            <person name="Gautier A."/>
            <person name="Giraud C."/>
            <person name="Giraud T."/>
            <person name="Gonzalez C."/>
            <person name="Grossetete S."/>
            <person name="Gueldener U."/>
            <person name="Henrissat B."/>
            <person name="Howlett B.J."/>
            <person name="Kodira C."/>
            <person name="Kretschmer M."/>
            <person name="Lappartient A."/>
            <person name="Leroch M."/>
            <person name="Levis C."/>
            <person name="Mauceli E."/>
            <person name="Neuveglise C."/>
            <person name="Oeser B."/>
            <person name="Pearson M."/>
            <person name="Poulain J."/>
            <person name="Poussereau N."/>
            <person name="Quesneville H."/>
            <person name="Rascle C."/>
            <person name="Schumacher J."/>
            <person name="Segurens B."/>
            <person name="Sexton A."/>
            <person name="Silva E."/>
            <person name="Sirven C."/>
            <person name="Soanes D.M."/>
            <person name="Talbot N.J."/>
            <person name="Templeton M."/>
            <person name="Yandava C."/>
            <person name="Yarden O."/>
            <person name="Zeng Q."/>
            <person name="Rollins J.A."/>
            <person name="Lebrun M.-H."/>
            <person name="Dickman M."/>
        </authorList>
    </citation>
    <scope>NUCLEOTIDE SEQUENCE [LARGE SCALE GENOMIC DNA]</scope>
    <source>
        <strain>ATCC 18683 / 1980 / Ss-1</strain>
    </source>
</reference>
<dbReference type="EMBL" id="CH476624">
    <property type="protein sequence ID" value="EDO01470.1"/>
    <property type="status" value="ALT_SEQ"/>
    <property type="molecule type" value="Genomic_DNA"/>
</dbReference>
<dbReference type="RefSeq" id="XP_001595855.1">
    <property type="nucleotide sequence ID" value="XM_001595805.1"/>
</dbReference>
<dbReference type="SMR" id="A7EF54"/>
<dbReference type="STRING" id="665079.A7EF54"/>
<dbReference type="GeneID" id="5492080"/>
<dbReference type="KEGG" id="ssl:SS1G_03945"/>
<dbReference type="VEuPathDB" id="FungiDB:sscle_09g072250"/>
<dbReference type="eggNOG" id="KOG4253">
    <property type="taxonomic scope" value="Eukaryota"/>
</dbReference>
<dbReference type="InParanoid" id="A7EF54"/>
<dbReference type="OrthoDB" id="69461at2759"/>
<dbReference type="Proteomes" id="UP000001312">
    <property type="component" value="Unassembled WGS sequence"/>
</dbReference>
<dbReference type="GO" id="GO:0005789">
    <property type="term" value="C:endoplasmic reticulum membrane"/>
    <property type="evidence" value="ECO:0007669"/>
    <property type="project" value="UniProtKB-SubCell"/>
</dbReference>
<dbReference type="GO" id="GO:0043529">
    <property type="term" value="C:GET complex"/>
    <property type="evidence" value="ECO:0000318"/>
    <property type="project" value="GO_Central"/>
</dbReference>
<dbReference type="GO" id="GO:0043495">
    <property type="term" value="F:protein-membrane adaptor activity"/>
    <property type="evidence" value="ECO:0000318"/>
    <property type="project" value="GO_Central"/>
</dbReference>
<dbReference type="GO" id="GO:0071816">
    <property type="term" value="P:tail-anchored membrane protein insertion into ER membrane"/>
    <property type="evidence" value="ECO:0000318"/>
    <property type="project" value="GO_Central"/>
</dbReference>
<dbReference type="FunFam" id="1.10.287.660:FF:000006">
    <property type="entry name" value="Protein GET1"/>
    <property type="match status" value="1"/>
</dbReference>
<dbReference type="Gene3D" id="1.10.287.660">
    <property type="entry name" value="Helix hairpin bin"/>
    <property type="match status" value="1"/>
</dbReference>
<dbReference type="HAMAP" id="MF_03113">
    <property type="entry name" value="Get1"/>
    <property type="match status" value="1"/>
</dbReference>
<dbReference type="InterPro" id="IPR028945">
    <property type="entry name" value="Get1"/>
</dbReference>
<dbReference type="InterPro" id="IPR027538">
    <property type="entry name" value="Get1_fungi"/>
</dbReference>
<dbReference type="InterPro" id="IPR029012">
    <property type="entry name" value="Helix_hairpin_bin_sf"/>
</dbReference>
<dbReference type="PANTHER" id="PTHR42650:SF1">
    <property type="entry name" value="GUIDED ENTRY OF TAIL-ANCHORED PROTEINS FACTOR 1"/>
    <property type="match status" value="1"/>
</dbReference>
<dbReference type="PANTHER" id="PTHR42650">
    <property type="entry name" value="TAIL-ANCHORED PROTEIN INSERTION RECEPTOR WRB"/>
    <property type="match status" value="1"/>
</dbReference>
<dbReference type="Pfam" id="PF04420">
    <property type="entry name" value="CHD5"/>
    <property type="match status" value="1"/>
</dbReference>